<organism>
    <name type="scientific">Escherichia coli O6:K15:H31 (strain 536 / UPEC)</name>
    <dbReference type="NCBI Taxonomy" id="362663"/>
    <lineage>
        <taxon>Bacteria</taxon>
        <taxon>Pseudomonadati</taxon>
        <taxon>Pseudomonadota</taxon>
        <taxon>Gammaproteobacteria</taxon>
        <taxon>Enterobacterales</taxon>
        <taxon>Enterobacteriaceae</taxon>
        <taxon>Escherichia</taxon>
    </lineage>
</organism>
<name>IRAD_ECOL5</name>
<dbReference type="EMBL" id="CP000247">
    <property type="protein sequence ID" value="ABG72597.1"/>
    <property type="molecule type" value="Genomic_DNA"/>
</dbReference>
<dbReference type="RefSeq" id="WP_001298053.1">
    <property type="nucleotide sequence ID" value="NC_008253.1"/>
</dbReference>
<dbReference type="SMR" id="Q0T8Y2"/>
<dbReference type="KEGG" id="ecp:ECP_4661"/>
<dbReference type="HOGENOM" id="CLU_1977621_0_0_6"/>
<dbReference type="Proteomes" id="UP000009182">
    <property type="component" value="Chromosome"/>
</dbReference>
<dbReference type="GO" id="GO:0005737">
    <property type="term" value="C:cytoplasm"/>
    <property type="evidence" value="ECO:0007669"/>
    <property type="project" value="UniProtKB-SubCell"/>
</dbReference>
<dbReference type="GO" id="GO:0043856">
    <property type="term" value="F:anti-sigma factor antagonist activity"/>
    <property type="evidence" value="ECO:0007669"/>
    <property type="project" value="InterPro"/>
</dbReference>
<dbReference type="GO" id="GO:0034599">
    <property type="term" value="P:cellular response to oxidative stress"/>
    <property type="evidence" value="ECO:0007669"/>
    <property type="project" value="UniProtKB-UniRule"/>
</dbReference>
<dbReference type="GO" id="GO:0006974">
    <property type="term" value="P:DNA damage response"/>
    <property type="evidence" value="ECO:0007669"/>
    <property type="project" value="InterPro"/>
</dbReference>
<dbReference type="HAMAP" id="MF_02010">
    <property type="entry name" value="IraD"/>
    <property type="match status" value="1"/>
</dbReference>
<dbReference type="InterPro" id="IPR023776">
    <property type="entry name" value="Anti-adapt_IraD"/>
</dbReference>
<dbReference type="InterPro" id="IPR007048">
    <property type="entry name" value="IraD/Gp25-like"/>
</dbReference>
<dbReference type="NCBIfam" id="NF010726">
    <property type="entry name" value="PRK14128.1-1"/>
    <property type="match status" value="1"/>
</dbReference>
<dbReference type="NCBIfam" id="NF010728">
    <property type="entry name" value="PRK14128.1-3"/>
    <property type="match status" value="1"/>
</dbReference>
<dbReference type="Pfam" id="PF04965">
    <property type="entry name" value="GPW_gp25"/>
    <property type="match status" value="1"/>
</dbReference>
<dbReference type="SUPFAM" id="SSF160719">
    <property type="entry name" value="gpW/gp25-like"/>
    <property type="match status" value="1"/>
</dbReference>
<gene>
    <name evidence="1" type="primary">iraD</name>
    <name type="ordered locus">ECP_4661</name>
</gene>
<protein>
    <recommendedName>
        <fullName evidence="1">Anti-adapter protein IraD</fullName>
    </recommendedName>
</protein>
<comment type="function">
    <text evidence="1">Inhibits RpoS proteolysis by regulating RssB activity, thereby increasing the stability of the sigma stress factor RpoS during oxidative stress. Its effect on RpoS stability is due to its interaction with RssB, which probably blocks the interaction of RssB with RpoS, and the consequent delivery of the RssB-RpoS complex to the ClpXP protein degradation pathway.</text>
</comment>
<comment type="subunit">
    <text evidence="1">Interacts with RssB.</text>
</comment>
<comment type="subcellular location">
    <subcellularLocation>
        <location evidence="1">Cytoplasm</location>
    </subcellularLocation>
</comment>
<comment type="similarity">
    <text evidence="1">Belongs to the GpW/Gp25 family. IraD subfamily.</text>
</comment>
<keyword id="KW-0963">Cytoplasm</keyword>
<keyword id="KW-0346">Stress response</keyword>
<feature type="chain" id="PRO_0000337895" description="Anti-adapter protein IraD">
    <location>
        <begin position="1"/>
        <end position="127"/>
    </location>
</feature>
<proteinExistence type="inferred from homology"/>
<evidence type="ECO:0000255" key="1">
    <source>
        <dbReference type="HAMAP-Rule" id="MF_02010"/>
    </source>
</evidence>
<accession>Q0T8Y2</accession>
<reference key="1">
    <citation type="journal article" date="2006" name="Mol. Microbiol.">
        <title>Role of pathogenicity island-associated integrases in the genome plasticity of uropathogenic Escherichia coli strain 536.</title>
        <authorList>
            <person name="Hochhut B."/>
            <person name="Wilde C."/>
            <person name="Balling G."/>
            <person name="Middendorf B."/>
            <person name="Dobrindt U."/>
            <person name="Brzuszkiewicz E."/>
            <person name="Gottschalk G."/>
            <person name="Carniel E."/>
            <person name="Hacker J."/>
        </authorList>
    </citation>
    <scope>NUCLEOTIDE SEQUENCE [LARGE SCALE GENOMIC DNA]</scope>
    <source>
        <strain>536 / UPEC</strain>
    </source>
</reference>
<sequence length="127" mass="14792">MMRQSVQTVLPESTGNNTLSLRDSVCRDLFQLFSSPHSPLPILLVSGMPEWQGHNQSDKLLQSWYCRQLRSALLFHEPRIAALQVNLKEAYCYELAISLEMMLYHDDEPLTFDLVWQKGSWHRTMPQ</sequence>